<evidence type="ECO:0000250" key="1">
    <source>
        <dbReference type="UniProtKB" id="Q92SJ1"/>
    </source>
</evidence>
<evidence type="ECO:0000269" key="2">
    <source>
    </source>
</evidence>
<evidence type="ECO:0000303" key="3">
    <source>
    </source>
</evidence>
<evidence type="ECO:0000305" key="4"/>
<evidence type="ECO:0000305" key="5">
    <source>
    </source>
</evidence>
<evidence type="ECO:0000312" key="6">
    <source>
        <dbReference type="EMBL" id="ADE86725.1"/>
    </source>
</evidence>
<feature type="chain" id="PRO_0000452114" description="L-ornithine N(alpha)-acyltransferase">
    <location>
        <begin position="1"/>
        <end position="259"/>
    </location>
</feature>
<name>OLSB_RHOCB</name>
<keyword id="KW-0012">Acyltransferase</keyword>
<keyword id="KW-0444">Lipid biosynthesis</keyword>
<keyword id="KW-0443">Lipid metabolism</keyword>
<keyword id="KW-1185">Reference proteome</keyword>
<keyword id="KW-0808">Transferase</keyword>
<accession>D5AQD6</accession>
<protein>
    <recommendedName>
        <fullName evidence="4">L-ornithine N(alpha)-acyltransferase</fullName>
        <ecNumber evidence="1">2.3.2.30</ecNumber>
    </recommendedName>
</protein>
<sequence>MAAAPLSYEIRLARDAQEIRASQRLRYAVFVEELGGAGPLIDHENRLEADEFDPLYDHLVLIDATKPEEDLDRVVAAYRLLRSDRAAEIGRFYCDAEYDLTPLRASGRRLLELGRSCVHPDHRGGAAMLMLWNALADYVLAHEIEILFGVASFHGTDVAALQQPLAWLHHHHLAPEGLRPRARQFQRMDLVAKEALDRRAALDAMPNLIKAYLRLGGFVGEGAFVDRPFNTTDVMLLMDTQAMSEKHREFYTRRVEGRG</sequence>
<comment type="function">
    <text evidence="1 5">Catalyzes the first step in the biosynthesis of ornithine lipids, which are phosphorus-free membrane lipids (Probable). Catalyzes the 3-hydroxyacyl-acyl carrier protein-dependent acylation of ornithine to form lyso-ornithine lipid (LOL) (By similarity).</text>
</comment>
<comment type="catalytic activity">
    <reaction evidence="1">
        <text>a (3R)-hydroxyacyl-[ACP] + L-ornithine = a lyso-ornithine lipid + holo-[ACP] + H(+)</text>
        <dbReference type="Rhea" id="RHEA:20633"/>
        <dbReference type="Rhea" id="RHEA-COMP:9685"/>
        <dbReference type="Rhea" id="RHEA-COMP:9945"/>
        <dbReference type="ChEBI" id="CHEBI:15378"/>
        <dbReference type="ChEBI" id="CHEBI:46911"/>
        <dbReference type="ChEBI" id="CHEBI:64479"/>
        <dbReference type="ChEBI" id="CHEBI:78827"/>
        <dbReference type="ChEBI" id="CHEBI:138482"/>
        <dbReference type="EC" id="2.3.2.30"/>
    </reaction>
    <physiologicalReaction direction="left-to-right" evidence="1">
        <dbReference type="Rhea" id="RHEA:20634"/>
    </physiologicalReaction>
</comment>
<comment type="pathway">
    <text evidence="2">Lipid metabolism.</text>
</comment>
<comment type="disruption phenotype">
    <text evidence="2">Mutant lacking this gene is unable to produce ornithine lipids.</text>
</comment>
<comment type="similarity">
    <text evidence="4">Belongs to the acetyltransferase family. OlsB subfamily.</text>
</comment>
<dbReference type="EC" id="2.3.2.30" evidence="1"/>
<dbReference type="EMBL" id="CP001312">
    <property type="protein sequence ID" value="ADE86725.1"/>
    <property type="molecule type" value="Genomic_DNA"/>
</dbReference>
<dbReference type="RefSeq" id="WP_013068698.1">
    <property type="nucleotide sequence ID" value="NC_014034.1"/>
</dbReference>
<dbReference type="SMR" id="D5AQD6"/>
<dbReference type="STRING" id="272942.RCAP_rcc02998"/>
<dbReference type="GeneID" id="31491793"/>
<dbReference type="KEGG" id="rcp:RCAP_rcc02998"/>
<dbReference type="eggNOG" id="COG3176">
    <property type="taxonomic scope" value="Bacteria"/>
</dbReference>
<dbReference type="HOGENOM" id="CLU_058962_1_1_5"/>
<dbReference type="OrthoDB" id="9787072at2"/>
<dbReference type="Proteomes" id="UP000002361">
    <property type="component" value="Chromosome"/>
</dbReference>
<dbReference type="GO" id="GO:0043810">
    <property type="term" value="F:ornithine-acyl [acyl carrier protein] N-acyltransferase activity"/>
    <property type="evidence" value="ECO:0007669"/>
    <property type="project" value="UniProtKB-EC"/>
</dbReference>
<dbReference type="GO" id="GO:0006629">
    <property type="term" value="P:lipid metabolic process"/>
    <property type="evidence" value="ECO:0007669"/>
    <property type="project" value="UniProtKB-KW"/>
</dbReference>
<dbReference type="Gene3D" id="3.40.630.30">
    <property type="match status" value="1"/>
</dbReference>
<dbReference type="InterPro" id="IPR016181">
    <property type="entry name" value="Acyl_CoA_acyltransferase"/>
</dbReference>
<dbReference type="InterPro" id="IPR052351">
    <property type="entry name" value="Ornithine_N-alpha-AT"/>
</dbReference>
<dbReference type="PANTHER" id="PTHR37323">
    <property type="entry name" value="GCN5-RELATED N-ACETYLTRANSFERASE"/>
    <property type="match status" value="1"/>
</dbReference>
<dbReference type="PANTHER" id="PTHR37323:SF1">
    <property type="entry name" value="L-ORNITHINE N(ALPHA)-ACYLTRANSFERASE"/>
    <property type="match status" value="1"/>
</dbReference>
<dbReference type="Pfam" id="PF13444">
    <property type="entry name" value="Acetyltransf_5"/>
    <property type="match status" value="1"/>
</dbReference>
<dbReference type="SUPFAM" id="SSF55729">
    <property type="entry name" value="Acyl-CoA N-acyltransferases (Nat)"/>
    <property type="match status" value="1"/>
</dbReference>
<reference key="1">
    <citation type="journal article" date="2010" name="J. Bacteriol.">
        <title>Complete genome sequence of the photosynthetic purple nonsulfur bacterium Rhodobacter capsulatus SB 1003.</title>
        <authorList>
            <person name="Strnad H."/>
            <person name="Lapidus A."/>
            <person name="Paces J."/>
            <person name="Ulbrich P."/>
            <person name="Vlcek C."/>
            <person name="Paces V."/>
            <person name="Haselkorn R."/>
        </authorList>
    </citation>
    <scope>NUCLEOTIDE SEQUENCE [LARGE SCALE GENOMIC DNA]</scope>
    <source>
        <strain>ATCC BAA-309 / NBRC 16581 / SB1003</strain>
    </source>
</reference>
<reference key="2">
    <citation type="journal article" date="2006" name="Mol. Microbiol.">
        <title>Ornithine lipid is required for optimal steady-state amounts of c-type cytochromes in Rhodobacter capsulatus.</title>
        <authorList>
            <person name="Aygun-Sunar S."/>
            <person name="Mandaci S."/>
            <person name="Koch H.G."/>
            <person name="Murray I.V."/>
            <person name="Goldfine H."/>
            <person name="Daldal F."/>
        </authorList>
    </citation>
    <scope>FUNCTION</scope>
    <scope>PATHWAY</scope>
    <scope>DISRUPTION PHENOTYPE</scope>
    <source>
        <strain>MT1131</strain>
    </source>
</reference>
<proteinExistence type="inferred from homology"/>
<gene>
    <name evidence="3" type="primary">olsB</name>
    <name evidence="6" type="ordered locus">RCAP_rcc02998</name>
</gene>
<organism>
    <name type="scientific">Rhodobacter capsulatus (strain ATCC BAA-309 / NBRC 16581 / SB1003)</name>
    <dbReference type="NCBI Taxonomy" id="272942"/>
    <lineage>
        <taxon>Bacteria</taxon>
        <taxon>Pseudomonadati</taxon>
        <taxon>Pseudomonadota</taxon>
        <taxon>Alphaproteobacteria</taxon>
        <taxon>Rhodobacterales</taxon>
        <taxon>Rhodobacter group</taxon>
        <taxon>Rhodobacter</taxon>
    </lineage>
</organism>